<evidence type="ECO:0000250" key="1"/>
<evidence type="ECO:0000250" key="2">
    <source>
        <dbReference type="UniProtKB" id="P82804"/>
    </source>
</evidence>
<evidence type="ECO:0000250" key="3">
    <source>
        <dbReference type="UniProtKB" id="Q9BRP8"/>
    </source>
</evidence>
<evidence type="ECO:0000255" key="4"/>
<evidence type="ECO:0000256" key="5">
    <source>
        <dbReference type="SAM" id="MobiDB-lite"/>
    </source>
</evidence>
<evidence type="ECO:0000305" key="6"/>
<reference key="1">
    <citation type="journal article" date="2010" name="BMC Genomics">
        <title>Salmo salar and Esox lucius full-length cDNA sequences reveal changes in evolutionary pressures on a post-tetraploidization genome.</title>
        <authorList>
            <person name="Leong J.S."/>
            <person name="Jantzen S.G."/>
            <person name="von Schalburg K.R."/>
            <person name="Cooper G.A."/>
            <person name="Messmer A.M."/>
            <person name="Liao N.Y."/>
            <person name="Munro S."/>
            <person name="Moore R."/>
            <person name="Holt R.A."/>
            <person name="Jones S.J."/>
            <person name="Davidson W.S."/>
            <person name="Koop B.F."/>
        </authorList>
    </citation>
    <scope>NUCLEOTIDE SEQUENCE [LARGE SCALE MRNA]</scope>
    <source>
        <tissue>Thyroid</tissue>
    </source>
</reference>
<gene>
    <name evidence="3" type="primary">pym1a</name>
    <name type="synonym">pyma</name>
    <name type="synonym">wibga</name>
</gene>
<keyword id="KW-0175">Coiled coil</keyword>
<keyword id="KW-0963">Cytoplasm</keyword>
<keyword id="KW-0866">Nonsense-mediated mRNA decay</keyword>
<keyword id="KW-0539">Nucleus</keyword>
<keyword id="KW-1185">Reference proteome</keyword>
<keyword id="KW-0810">Translation regulation</keyword>
<proteinExistence type="evidence at transcript level"/>
<protein>
    <recommendedName>
        <fullName evidence="2">Partner of Y14 and mago A</fullName>
    </recommendedName>
    <alternativeName>
        <fullName evidence="3">PYM homolog 1 exon junction complex-associated factor A</fullName>
    </alternativeName>
    <alternativeName>
        <fullName>Protein wibg homolog A</fullName>
    </alternativeName>
</protein>
<feature type="chain" id="PRO_0000378156" description="Partner of Y14 and mago A">
    <location>
        <begin position="1"/>
        <end position="202"/>
    </location>
</feature>
<feature type="region of interest" description="Disordered" evidence="5">
    <location>
        <begin position="54"/>
        <end position="73"/>
    </location>
</feature>
<feature type="region of interest" description="Disordered" evidence="5">
    <location>
        <begin position="86"/>
        <end position="143"/>
    </location>
</feature>
<feature type="coiled-coil region" evidence="4">
    <location>
        <begin position="142"/>
        <end position="200"/>
    </location>
</feature>
<feature type="compositionally biased region" description="Basic residues" evidence="5">
    <location>
        <begin position="89"/>
        <end position="102"/>
    </location>
</feature>
<name>PYM1A_SALSA</name>
<organism>
    <name type="scientific">Salmo salar</name>
    <name type="common">Atlantic salmon</name>
    <dbReference type="NCBI Taxonomy" id="8030"/>
    <lineage>
        <taxon>Eukaryota</taxon>
        <taxon>Metazoa</taxon>
        <taxon>Chordata</taxon>
        <taxon>Craniata</taxon>
        <taxon>Vertebrata</taxon>
        <taxon>Euteleostomi</taxon>
        <taxon>Actinopterygii</taxon>
        <taxon>Neopterygii</taxon>
        <taxon>Teleostei</taxon>
        <taxon>Protacanthopterygii</taxon>
        <taxon>Salmoniformes</taxon>
        <taxon>Salmonidae</taxon>
        <taxon>Salmoninae</taxon>
        <taxon>Salmo</taxon>
    </lineage>
</organism>
<dbReference type="EMBL" id="BT049052">
    <property type="protein sequence ID" value="ACI68853.1"/>
    <property type="molecule type" value="mRNA"/>
</dbReference>
<dbReference type="RefSeq" id="XP_014002191.2">
    <property type="nucleotide sequence ID" value="XM_014146716.2"/>
</dbReference>
<dbReference type="SMR" id="B5XDD3"/>
<dbReference type="STRING" id="8030.ENSSSAP00000040163"/>
<dbReference type="PaxDb" id="8030-ENSSSAP00000040163"/>
<dbReference type="Ensembl" id="ENSSSAT00000066364">
    <property type="protein sequence ID" value="ENSSSAP00000040163"/>
    <property type="gene ID" value="ENSSSAG00000044441"/>
</dbReference>
<dbReference type="Ensembl" id="ENSSSAT00020111821">
    <property type="protein sequence ID" value="ENSSSAP00020082218"/>
    <property type="gene ID" value="ENSSSAG00020052033"/>
</dbReference>
<dbReference type="Ensembl" id="ENSSSAT00070067049">
    <property type="protein sequence ID" value="ENSSSAP00070064245"/>
    <property type="gene ID" value="ENSSSAG00070041740"/>
</dbReference>
<dbReference type="Ensembl" id="ENSSSAT00075064815">
    <property type="protein sequence ID" value="ENSSSAP00075045838"/>
    <property type="gene ID" value="ENSSSAG00075031116"/>
</dbReference>
<dbReference type="GeneID" id="106572489"/>
<dbReference type="KEGG" id="sasa:106572489"/>
<dbReference type="CTD" id="106572489"/>
<dbReference type="OMA" id="IPGCADS"/>
<dbReference type="Proteomes" id="UP000087266">
    <property type="component" value="Chromosome ssa15"/>
</dbReference>
<dbReference type="GO" id="GO:0005737">
    <property type="term" value="C:cytoplasm"/>
    <property type="evidence" value="ECO:0007669"/>
    <property type="project" value="UniProtKB-SubCell"/>
</dbReference>
<dbReference type="GO" id="GO:0035145">
    <property type="term" value="C:exon-exon junction complex"/>
    <property type="evidence" value="ECO:0000250"/>
    <property type="project" value="UniProtKB"/>
</dbReference>
<dbReference type="GO" id="GO:0005730">
    <property type="term" value="C:nucleolus"/>
    <property type="evidence" value="ECO:0007669"/>
    <property type="project" value="UniProtKB-SubCell"/>
</dbReference>
<dbReference type="GO" id="GO:0005654">
    <property type="term" value="C:nucleoplasm"/>
    <property type="evidence" value="ECO:0007669"/>
    <property type="project" value="UniProtKB-SubCell"/>
</dbReference>
<dbReference type="GO" id="GO:0043022">
    <property type="term" value="F:ribosome binding"/>
    <property type="evidence" value="ECO:0000250"/>
    <property type="project" value="UniProtKB"/>
</dbReference>
<dbReference type="GO" id="GO:0003723">
    <property type="term" value="F:RNA binding"/>
    <property type="evidence" value="ECO:0007669"/>
    <property type="project" value="TreeGrafter"/>
</dbReference>
<dbReference type="GO" id="GO:1903259">
    <property type="term" value="P:exon-exon junction complex disassembly"/>
    <property type="evidence" value="ECO:0007669"/>
    <property type="project" value="InterPro"/>
</dbReference>
<dbReference type="GO" id="GO:0000184">
    <property type="term" value="P:nuclear-transcribed mRNA catabolic process, nonsense-mediated decay"/>
    <property type="evidence" value="ECO:0000250"/>
    <property type="project" value="UniProtKB"/>
</dbReference>
<dbReference type="GO" id="GO:0045727">
    <property type="term" value="P:positive regulation of translation"/>
    <property type="evidence" value="ECO:0000250"/>
    <property type="project" value="UniProtKB"/>
</dbReference>
<dbReference type="InterPro" id="IPR039333">
    <property type="entry name" value="PYM1"/>
</dbReference>
<dbReference type="InterPro" id="IPR015362">
    <property type="entry name" value="WIBG_mago-bd"/>
</dbReference>
<dbReference type="InterPro" id="IPR036348">
    <property type="entry name" value="WIBG_N_sf"/>
</dbReference>
<dbReference type="PANTHER" id="PTHR22959:SF0">
    <property type="entry name" value="PARTNER OF Y14 AND MAGO"/>
    <property type="match status" value="1"/>
</dbReference>
<dbReference type="PANTHER" id="PTHR22959">
    <property type="entry name" value="PYM PROTEIN"/>
    <property type="match status" value="1"/>
</dbReference>
<dbReference type="Pfam" id="PF09282">
    <property type="entry name" value="Mago-bind"/>
    <property type="match status" value="1"/>
</dbReference>
<dbReference type="SMART" id="SM01273">
    <property type="entry name" value="Mago-bind"/>
    <property type="match status" value="1"/>
</dbReference>
<dbReference type="SUPFAM" id="SSF101931">
    <property type="entry name" value="Pym (Within the bgcn gene intron protein, WIBG), N-terminal domain"/>
    <property type="match status" value="1"/>
</dbReference>
<sequence>MATPYVEDQSGKYIAATQRPDGTWRKPRRVKDGYTPQEEVPVYENKFVKFFKGKPDLPPGMSPGNAAQARQQQGIPGIAENEIAGLSKTAKRNMKRKEKRKQQGPDSNVELLTNAVETMTFAEDGDNVTPASNPAGATYDPSSAIAEKAKKIKNIKKKLRQVEELQQKLDSGEIKQATKEQQEKLGRAKALQGELLQLEEDS</sequence>
<comment type="function">
    <text evidence="1">Key regulator of the exon junction complex (EJC), a multiprotein complex that associates immediately upstream of the exon-exon junction on mRNAs and serves as a positional landmark for the intron exon structure of genes and directs post-transcriptional processes in the cytoplasm such as mRNA export, nonsense-mediated mRNA decay (NMD) or translation. Acts as an EJC disassembly factor, allowing translation-dependent EJC removal and recycling by disrupting mature EJC from spliced mRNAs. Its association with the 40S ribosomal subunit probably prevents a translation-independent disassembly of the EJC from spliced mRNAs, by restricting its activity to mRNAs that have been translated. Interferes with NMD and enhances translation of spliced mRNAs, probably by antagonizing EJC functions (By similarity).</text>
</comment>
<comment type="subunit">
    <text evidence="1">Interacts (via N-terminus) with magoh and rbm8a; the interaction is direct. Associates (eIF2A-like region) with the 40S ribosomal subunit and the 48S preinitiation complex (By similarity).</text>
</comment>
<comment type="subcellular location">
    <subcellularLocation>
        <location evidence="3">Cytoplasm</location>
    </subcellularLocation>
    <subcellularLocation>
        <location evidence="3">Nucleus</location>
        <location evidence="3">Nucleolus</location>
    </subcellularLocation>
    <subcellularLocation>
        <location evidence="3">Nucleus</location>
        <location evidence="3">Nucleoplasm</location>
    </subcellularLocation>
    <text evidence="3">Shuttles between the nucleus and the cytoplasm. Nuclear export is mediated by XPO1/CRM1.</text>
</comment>
<comment type="similarity">
    <text evidence="6">Belongs to the pym family.</text>
</comment>
<accession>B5XDD3</accession>